<dbReference type="EC" id="2.3.1.225" evidence="11"/>
<dbReference type="EC" id="2.3.1.-" evidence="11"/>
<dbReference type="EMBL" id="CR925805">
    <property type="status" value="NOT_ANNOTATED_CDS"/>
    <property type="molecule type" value="Genomic_DNA"/>
</dbReference>
<dbReference type="EMBL" id="BC076087">
    <property type="protein sequence ID" value="AAH76087.1"/>
    <property type="molecule type" value="mRNA"/>
</dbReference>
<dbReference type="RefSeq" id="NP_001002725.1">
    <property type="nucleotide sequence ID" value="NM_001002725.1"/>
</dbReference>
<dbReference type="SMR" id="F1RE57"/>
<dbReference type="FunCoup" id="F1RE57">
    <property type="interactions" value="139"/>
</dbReference>
<dbReference type="STRING" id="7955.ENSDARP00000025104"/>
<dbReference type="PaxDb" id="7955-ENSDARP00000025104"/>
<dbReference type="Ensembl" id="ENSDART00000017017">
    <property type="protein sequence ID" value="ENSDARP00000025104"/>
    <property type="gene ID" value="ENSDARG00000010981"/>
</dbReference>
<dbReference type="GeneID" id="436998"/>
<dbReference type="KEGG" id="dre:436998"/>
<dbReference type="AGR" id="ZFIN:ZDB-GENE-040718-484"/>
<dbReference type="CTD" id="436998"/>
<dbReference type="ZFIN" id="ZDB-GENE-040718-484">
    <property type="gene designation" value="zdhhc3a"/>
</dbReference>
<dbReference type="eggNOG" id="KOG1311">
    <property type="taxonomic scope" value="Eukaryota"/>
</dbReference>
<dbReference type="InParanoid" id="F1RE57"/>
<dbReference type="OMA" id="HILMCLA"/>
<dbReference type="OrthoDB" id="331948at2759"/>
<dbReference type="PhylomeDB" id="F1RE57"/>
<dbReference type="TreeFam" id="TF319798"/>
<dbReference type="PRO" id="PR:F1RE57"/>
<dbReference type="Proteomes" id="UP000000437">
    <property type="component" value="Chromosome 16"/>
</dbReference>
<dbReference type="Bgee" id="ENSDARG00000010981">
    <property type="expression patterns" value="Expressed in mature ovarian follicle and 23 other cell types or tissues"/>
</dbReference>
<dbReference type="GO" id="GO:0005783">
    <property type="term" value="C:endoplasmic reticulum"/>
    <property type="evidence" value="ECO:0000318"/>
    <property type="project" value="GO_Central"/>
</dbReference>
<dbReference type="GO" id="GO:0005794">
    <property type="term" value="C:Golgi apparatus"/>
    <property type="evidence" value="ECO:0000250"/>
    <property type="project" value="UniProtKB"/>
</dbReference>
<dbReference type="GO" id="GO:0000139">
    <property type="term" value="C:Golgi membrane"/>
    <property type="evidence" value="ECO:0007669"/>
    <property type="project" value="UniProtKB-SubCell"/>
</dbReference>
<dbReference type="GO" id="GO:0042803">
    <property type="term" value="F:protein homodimerization activity"/>
    <property type="evidence" value="ECO:0000250"/>
    <property type="project" value="UniProtKB"/>
</dbReference>
<dbReference type="GO" id="GO:0019705">
    <property type="term" value="F:protein-cysteine S-myristoyltransferase activity"/>
    <property type="evidence" value="ECO:0000305"/>
    <property type="project" value="UniProtKB"/>
</dbReference>
<dbReference type="GO" id="GO:0019706">
    <property type="term" value="F:protein-cysteine S-palmitoyltransferase activity"/>
    <property type="evidence" value="ECO:0000250"/>
    <property type="project" value="UniProtKB"/>
</dbReference>
<dbReference type="GO" id="GO:0140439">
    <property type="term" value="F:protein-cysteine S-stearoyltransferase activity"/>
    <property type="evidence" value="ECO:0000305"/>
    <property type="project" value="UniProtKB"/>
</dbReference>
<dbReference type="GO" id="GO:0016417">
    <property type="term" value="F:S-acyltransferase activity"/>
    <property type="evidence" value="ECO:0000314"/>
    <property type="project" value="ZFIN"/>
</dbReference>
<dbReference type="GO" id="GO:0018230">
    <property type="term" value="P:peptidyl-L-cysteine S-palmitoylation"/>
    <property type="evidence" value="ECO:0000314"/>
    <property type="project" value="UniProtKB"/>
</dbReference>
<dbReference type="GO" id="GO:0072659">
    <property type="term" value="P:protein localization to plasma membrane"/>
    <property type="evidence" value="ECO:0000318"/>
    <property type="project" value="GO_Central"/>
</dbReference>
<dbReference type="GO" id="GO:0018345">
    <property type="term" value="P:protein palmitoylation"/>
    <property type="evidence" value="ECO:0000250"/>
    <property type="project" value="UniProtKB"/>
</dbReference>
<dbReference type="GO" id="GO:0006612">
    <property type="term" value="P:protein targeting to membrane"/>
    <property type="evidence" value="ECO:0000318"/>
    <property type="project" value="GO_Central"/>
</dbReference>
<dbReference type="GO" id="GO:0008277">
    <property type="term" value="P:regulation of G protein-coupled receptor signaling pathway"/>
    <property type="evidence" value="ECO:0000318"/>
    <property type="project" value="GO_Central"/>
</dbReference>
<dbReference type="InterPro" id="IPR001594">
    <property type="entry name" value="Palmitoyltrfase_DHHC"/>
</dbReference>
<dbReference type="InterPro" id="IPR039859">
    <property type="entry name" value="PFA4/ZDH16/20/ERF2-like"/>
</dbReference>
<dbReference type="PANTHER" id="PTHR12246">
    <property type="entry name" value="PALMITOYLTRANSFERASE ZDHHC16"/>
    <property type="match status" value="1"/>
</dbReference>
<dbReference type="Pfam" id="PF01529">
    <property type="entry name" value="DHHC"/>
    <property type="match status" value="1"/>
</dbReference>
<dbReference type="PROSITE" id="PS50216">
    <property type="entry name" value="DHHC"/>
    <property type="match status" value="1"/>
</dbReference>
<evidence type="ECO:0000250" key="1">
    <source>
        <dbReference type="UniProtKB" id="Q8IUH5"/>
    </source>
</evidence>
<evidence type="ECO:0000250" key="2">
    <source>
        <dbReference type="UniProtKB" id="Q8R173"/>
    </source>
</evidence>
<evidence type="ECO:0000255" key="3"/>
<evidence type="ECO:0000255" key="4">
    <source>
        <dbReference type="PROSITE-ProRule" id="PRU00067"/>
    </source>
</evidence>
<evidence type="ECO:0000269" key="5">
    <source>
    </source>
</evidence>
<evidence type="ECO:0000269" key="6">
    <source>
    </source>
</evidence>
<evidence type="ECO:0000303" key="7">
    <source>
    </source>
</evidence>
<evidence type="ECO:0000303" key="8">
    <source>
    </source>
</evidence>
<evidence type="ECO:0000305" key="9"/>
<evidence type="ECO:0000305" key="10">
    <source>
    </source>
</evidence>
<evidence type="ECO:0000305" key="11">
    <source>
    </source>
</evidence>
<organism>
    <name type="scientific">Danio rerio</name>
    <name type="common">Zebrafish</name>
    <name type="synonym">Brachydanio rerio</name>
    <dbReference type="NCBI Taxonomy" id="7955"/>
    <lineage>
        <taxon>Eukaryota</taxon>
        <taxon>Metazoa</taxon>
        <taxon>Chordata</taxon>
        <taxon>Craniata</taxon>
        <taxon>Vertebrata</taxon>
        <taxon>Euteleostomi</taxon>
        <taxon>Actinopterygii</taxon>
        <taxon>Neopterygii</taxon>
        <taxon>Teleostei</taxon>
        <taxon>Ostariophysi</taxon>
        <taxon>Cypriniformes</taxon>
        <taxon>Danionidae</taxon>
        <taxon>Danioninae</taxon>
        <taxon>Danio</taxon>
    </lineage>
</organism>
<proteinExistence type="evidence at protein level"/>
<reference key="1">
    <citation type="journal article" date="2013" name="Nature">
        <title>The zebrafish reference genome sequence and its relationship to the human genome.</title>
        <authorList>
            <person name="Howe K."/>
            <person name="Clark M.D."/>
            <person name="Torroja C.F."/>
            <person name="Torrance J."/>
            <person name="Berthelot C."/>
            <person name="Muffato M."/>
            <person name="Collins J.E."/>
            <person name="Humphray S."/>
            <person name="McLaren K."/>
            <person name="Matthews L."/>
            <person name="McLaren S."/>
            <person name="Sealy I."/>
            <person name="Caccamo M."/>
            <person name="Churcher C."/>
            <person name="Scott C."/>
            <person name="Barrett J.C."/>
            <person name="Koch R."/>
            <person name="Rauch G.J."/>
            <person name="White S."/>
            <person name="Chow W."/>
            <person name="Kilian B."/>
            <person name="Quintais L.T."/>
            <person name="Guerra-Assuncao J.A."/>
            <person name="Zhou Y."/>
            <person name="Gu Y."/>
            <person name="Yen J."/>
            <person name="Vogel J.H."/>
            <person name="Eyre T."/>
            <person name="Redmond S."/>
            <person name="Banerjee R."/>
            <person name="Chi J."/>
            <person name="Fu B."/>
            <person name="Langley E."/>
            <person name="Maguire S.F."/>
            <person name="Laird G.K."/>
            <person name="Lloyd D."/>
            <person name="Kenyon E."/>
            <person name="Donaldson S."/>
            <person name="Sehra H."/>
            <person name="Almeida-King J."/>
            <person name="Loveland J."/>
            <person name="Trevanion S."/>
            <person name="Jones M."/>
            <person name="Quail M."/>
            <person name="Willey D."/>
            <person name="Hunt A."/>
            <person name="Burton J."/>
            <person name="Sims S."/>
            <person name="McLay K."/>
            <person name="Plumb B."/>
            <person name="Davis J."/>
            <person name="Clee C."/>
            <person name="Oliver K."/>
            <person name="Clark R."/>
            <person name="Riddle C."/>
            <person name="Elliot D."/>
            <person name="Threadgold G."/>
            <person name="Harden G."/>
            <person name="Ware D."/>
            <person name="Begum S."/>
            <person name="Mortimore B."/>
            <person name="Kerry G."/>
            <person name="Heath P."/>
            <person name="Phillimore B."/>
            <person name="Tracey A."/>
            <person name="Corby N."/>
            <person name="Dunn M."/>
            <person name="Johnson C."/>
            <person name="Wood J."/>
            <person name="Clark S."/>
            <person name="Pelan S."/>
            <person name="Griffiths G."/>
            <person name="Smith M."/>
            <person name="Glithero R."/>
            <person name="Howden P."/>
            <person name="Barker N."/>
            <person name="Lloyd C."/>
            <person name="Stevens C."/>
            <person name="Harley J."/>
            <person name="Holt K."/>
            <person name="Panagiotidis G."/>
            <person name="Lovell J."/>
            <person name="Beasley H."/>
            <person name="Henderson C."/>
            <person name="Gordon D."/>
            <person name="Auger K."/>
            <person name="Wright D."/>
            <person name="Collins J."/>
            <person name="Raisen C."/>
            <person name="Dyer L."/>
            <person name="Leung K."/>
            <person name="Robertson L."/>
            <person name="Ambridge K."/>
            <person name="Leongamornlert D."/>
            <person name="McGuire S."/>
            <person name="Gilderthorp R."/>
            <person name="Griffiths C."/>
            <person name="Manthravadi D."/>
            <person name="Nichol S."/>
            <person name="Barker G."/>
            <person name="Whitehead S."/>
            <person name="Kay M."/>
            <person name="Brown J."/>
            <person name="Murnane C."/>
            <person name="Gray E."/>
            <person name="Humphries M."/>
            <person name="Sycamore N."/>
            <person name="Barker D."/>
            <person name="Saunders D."/>
            <person name="Wallis J."/>
            <person name="Babbage A."/>
            <person name="Hammond S."/>
            <person name="Mashreghi-Mohammadi M."/>
            <person name="Barr L."/>
            <person name="Martin S."/>
            <person name="Wray P."/>
            <person name="Ellington A."/>
            <person name="Matthews N."/>
            <person name="Ellwood M."/>
            <person name="Woodmansey R."/>
            <person name="Clark G."/>
            <person name="Cooper J."/>
            <person name="Tromans A."/>
            <person name="Grafham D."/>
            <person name="Skuce C."/>
            <person name="Pandian R."/>
            <person name="Andrews R."/>
            <person name="Harrison E."/>
            <person name="Kimberley A."/>
            <person name="Garnett J."/>
            <person name="Fosker N."/>
            <person name="Hall R."/>
            <person name="Garner P."/>
            <person name="Kelly D."/>
            <person name="Bird C."/>
            <person name="Palmer S."/>
            <person name="Gehring I."/>
            <person name="Berger A."/>
            <person name="Dooley C.M."/>
            <person name="Ersan-Urun Z."/>
            <person name="Eser C."/>
            <person name="Geiger H."/>
            <person name="Geisler M."/>
            <person name="Karotki L."/>
            <person name="Kirn A."/>
            <person name="Konantz J."/>
            <person name="Konantz M."/>
            <person name="Oberlander M."/>
            <person name="Rudolph-Geiger S."/>
            <person name="Teucke M."/>
            <person name="Lanz C."/>
            <person name="Raddatz G."/>
            <person name="Osoegawa K."/>
            <person name="Zhu B."/>
            <person name="Rapp A."/>
            <person name="Widaa S."/>
            <person name="Langford C."/>
            <person name="Yang F."/>
            <person name="Schuster S.C."/>
            <person name="Carter N.P."/>
            <person name="Harrow J."/>
            <person name="Ning Z."/>
            <person name="Herrero J."/>
            <person name="Searle S.M."/>
            <person name="Enright A."/>
            <person name="Geisler R."/>
            <person name="Plasterk R.H."/>
            <person name="Lee C."/>
            <person name="Westerfield M."/>
            <person name="de Jong P.J."/>
            <person name="Zon L.I."/>
            <person name="Postlethwait J.H."/>
            <person name="Nusslein-Volhard C."/>
            <person name="Hubbard T.J."/>
            <person name="Roest Crollius H."/>
            <person name="Rogers J."/>
            <person name="Stemple D.L."/>
        </authorList>
    </citation>
    <scope>NUCLEOTIDE SEQUENCE [LARGE SCALE GENOMIC DNA]</scope>
    <source>
        <strain>Tuebingen</strain>
    </source>
</reference>
<reference key="2">
    <citation type="submission" date="2004-07" db="EMBL/GenBank/DDBJ databases">
        <authorList>
            <consortium name="NIH - Zebrafish Gene Collection (ZGC) project"/>
        </authorList>
    </citation>
    <scope>NUCLEOTIDE SEQUENCE [LARGE SCALE MRNA]</scope>
    <source>
        <tissue>Embryo</tissue>
    </source>
</reference>
<reference key="3">
    <citation type="journal article" date="2015" name="Neurotoxicol. Teratol.">
        <title>2-Bromopalmitate impairs neural stem/progenitor cell proliferation, promotes cell apoptosis and induces malformation in zebrafish embryonic brain.</title>
        <authorList>
            <person name="Wang C."/>
            <person name="Chen X."/>
            <person name="Shi W."/>
            <person name="Wang F."/>
            <person name="Du Z."/>
            <person name="Li X."/>
            <person name="Yao Y."/>
            <person name="Liu T."/>
            <person name="Shao T."/>
            <person name="Li G."/>
            <person name="Hao A."/>
        </authorList>
    </citation>
    <scope>DEVELOPMENTAL STAGE</scope>
</reference>
<reference key="4">
    <citation type="journal article" date="2016" name="Biochem. Biophys. Res. Commun.">
        <title>Protein palmitoylation activate zygotic gene expression during the maternal-to-zygotic transition.</title>
        <authorList>
            <person name="Du Z."/>
            <person name="Chen X."/>
            <person name="Li X."/>
            <person name="He K."/>
            <person name="Ji S."/>
            <person name="Shi W."/>
            <person name="Hao A."/>
        </authorList>
    </citation>
    <scope>DEVELOPMENTAL STAGE</scope>
</reference>
<reference key="5">
    <citation type="journal article" date="2017" name="Proc. Natl. Acad. Sci. U.S.A.">
        <title>Molecular basis of fatty acid selectivity in the zDHHC family of S-acyltransferases revealed by click chemistry.</title>
        <authorList>
            <person name="Greaves J."/>
            <person name="Munro K.R."/>
            <person name="Davidson S.C."/>
            <person name="Riviere M."/>
            <person name="Wojno J."/>
            <person name="Smith T.K."/>
            <person name="Tomkinson N.C."/>
            <person name="Chamberlain L.H."/>
        </authorList>
    </citation>
    <scope>FUNCTION</scope>
    <scope>CATALYTIC ACTIVITY</scope>
    <scope>SUBSTRATE SPECIFICITY</scope>
</reference>
<name>DHC3A_DANRE</name>
<sequence length="316" mass="35892">MRSPVPRFRDVERQASGLQPPQCLPSCHERQSSMWFIKDACGIVCAIITWFLVFFAEFVVLFVMLIPSKNLTYSLVNGTLFNSLAFLALASHFRAMCTDPGAVPKGNATKEYIESLQLKPGQVVYKCPKCCSIKPDRAHHCSVCKRCIRKMDHHCPWVNNCVGENNQKYFVLFTMYICLISLHSLVMVVFHFLNCFEDDWTKCSTFSPPATVILLILLCFEGLLFLIFTSVMFGTQVHSICTDETGIEKLKREDPTWEKTQCWEGMKSAFGGPLSVTWFSPFTDLSCQKDDSSPVPMFPQGEIIEEDVIEIPLEPH</sequence>
<comment type="function">
    <text evidence="11">Golgi-localized palmitoyltransferase that catalyzes the addition of palmitate onto various protein substrates and regulates their association with membranes (Probable). Has no stringent fatty acid selectivity and in addition to palmitate can also transfer onto target proteins myristate from tetradecanoyl-CoA and stearate from octadecanoyl-CoA (Probable).</text>
</comment>
<comment type="catalytic activity">
    <reaction evidence="11">
        <text>L-cysteinyl-[protein] + hexadecanoyl-CoA = S-hexadecanoyl-L-cysteinyl-[protein] + CoA</text>
        <dbReference type="Rhea" id="RHEA:36683"/>
        <dbReference type="Rhea" id="RHEA-COMP:10131"/>
        <dbReference type="Rhea" id="RHEA-COMP:11032"/>
        <dbReference type="ChEBI" id="CHEBI:29950"/>
        <dbReference type="ChEBI" id="CHEBI:57287"/>
        <dbReference type="ChEBI" id="CHEBI:57379"/>
        <dbReference type="ChEBI" id="CHEBI:74151"/>
        <dbReference type="EC" id="2.3.1.225"/>
    </reaction>
    <physiologicalReaction direction="left-to-right" evidence="11">
        <dbReference type="Rhea" id="RHEA:36684"/>
    </physiologicalReaction>
</comment>
<comment type="catalytic activity">
    <reaction evidence="11">
        <text>L-cysteinyl-[protein] + tetradecanoyl-CoA = S-tetradecanoyl-L-cysteinyl-[protein] + CoA</text>
        <dbReference type="Rhea" id="RHEA:59736"/>
        <dbReference type="Rhea" id="RHEA-COMP:10131"/>
        <dbReference type="Rhea" id="RHEA-COMP:15433"/>
        <dbReference type="ChEBI" id="CHEBI:29950"/>
        <dbReference type="ChEBI" id="CHEBI:57287"/>
        <dbReference type="ChEBI" id="CHEBI:57385"/>
        <dbReference type="ChEBI" id="CHEBI:143199"/>
    </reaction>
    <physiologicalReaction direction="left-to-right" evidence="11">
        <dbReference type="Rhea" id="RHEA:59737"/>
    </physiologicalReaction>
</comment>
<comment type="catalytic activity">
    <reaction evidence="11">
        <text>L-cysteinyl-[protein] + octadecanoyl-CoA = S-octadecanoyl-L-cysteinyl-[protein] + CoA</text>
        <dbReference type="Rhea" id="RHEA:59740"/>
        <dbReference type="Rhea" id="RHEA-COMP:10131"/>
        <dbReference type="Rhea" id="RHEA-COMP:15434"/>
        <dbReference type="ChEBI" id="CHEBI:29950"/>
        <dbReference type="ChEBI" id="CHEBI:57287"/>
        <dbReference type="ChEBI" id="CHEBI:57394"/>
        <dbReference type="ChEBI" id="CHEBI:143200"/>
    </reaction>
    <physiologicalReaction direction="left-to-right" evidence="11">
        <dbReference type="Rhea" id="RHEA:59741"/>
    </physiologicalReaction>
</comment>
<comment type="subunit">
    <text evidence="2">Monomer. Homooligomers. The monomeric form has a higher catalytic activity. Forms heterooligomers with zdhhc7.</text>
</comment>
<comment type="subcellular location">
    <subcellularLocation>
        <location evidence="2">Golgi apparatus membrane</location>
        <topology evidence="3">Multi-pass membrane protein</topology>
    </subcellularLocation>
</comment>
<comment type="developmental stage">
    <text evidence="5 6">Probably maternally supplied, the zygotic expression is detected early during development at the sphere stage but decreases after 7.5 hpf.</text>
</comment>
<comment type="domain">
    <text evidence="1">The DHHC domain is required for palmitoyltransferase activity.</text>
</comment>
<comment type="PTM">
    <text evidence="2">Autopalmitoylated.</text>
</comment>
<comment type="similarity">
    <text evidence="9">Belongs to the DHHC palmitoyltransferase family.</text>
</comment>
<accession>F1RE57</accession>
<accession>Q6DH92</accession>
<feature type="chain" id="PRO_0000449531" description="Palmitoyltransferase ZDHHC3-A">
    <location>
        <begin position="1"/>
        <end position="316"/>
    </location>
</feature>
<feature type="topological domain" description="Cytoplasmic" evidence="9">
    <location>
        <begin position="1"/>
        <end position="45"/>
    </location>
</feature>
<feature type="transmembrane region" description="Helical" evidence="3">
    <location>
        <begin position="46"/>
        <end position="66"/>
    </location>
</feature>
<feature type="topological domain" description="Lumenal" evidence="9">
    <location>
        <begin position="67"/>
        <end position="70"/>
    </location>
</feature>
<feature type="transmembrane region" description="Helical" evidence="3">
    <location>
        <begin position="71"/>
        <end position="91"/>
    </location>
</feature>
<feature type="topological domain" description="Cytoplasmic" evidence="9">
    <location>
        <begin position="92"/>
        <end position="169"/>
    </location>
</feature>
<feature type="transmembrane region" description="Helical" evidence="3">
    <location>
        <begin position="170"/>
        <end position="190"/>
    </location>
</feature>
<feature type="topological domain" description="Lumenal" evidence="9">
    <location>
        <begin position="191"/>
        <end position="212"/>
    </location>
</feature>
<feature type="transmembrane region" description="Helical" evidence="3">
    <location>
        <begin position="213"/>
        <end position="233"/>
    </location>
</feature>
<feature type="topological domain" description="Cytoplasmic" evidence="9">
    <location>
        <begin position="234"/>
        <end position="316"/>
    </location>
</feature>
<feature type="domain" description="DHHC" evidence="4">
    <location>
        <begin position="124"/>
        <end position="175"/>
    </location>
</feature>
<feature type="active site" description="S-palmitoyl cysteine intermediate" evidence="4">
    <location>
        <position position="155"/>
    </location>
</feature>
<feature type="lipid moiety-binding region" description="S-palmitoyl cysteine" evidence="2">
    <location>
        <position position="144"/>
    </location>
</feature>
<feature type="sequence conflict" description="In Ref. 2; AAH76087." evidence="9" ref="2">
    <original>S</original>
    <variation>N</variation>
    <location>
        <position position="32"/>
    </location>
</feature>
<keyword id="KW-0012">Acyltransferase</keyword>
<keyword id="KW-0333">Golgi apparatus</keyword>
<keyword id="KW-0449">Lipoprotein</keyword>
<keyword id="KW-0472">Membrane</keyword>
<keyword id="KW-0564">Palmitate</keyword>
<keyword id="KW-1185">Reference proteome</keyword>
<keyword id="KW-0808">Transferase</keyword>
<keyword id="KW-0812">Transmembrane</keyword>
<keyword id="KW-1133">Transmembrane helix</keyword>
<protein>
    <recommendedName>
        <fullName evidence="9">Palmitoyltransferase ZDHHC3-A</fullName>
        <ecNumber evidence="11">2.3.1.225</ecNumber>
    </recommendedName>
    <alternativeName>
        <fullName evidence="11">Acyltransferase ZDHHC3A</fullName>
        <ecNumber evidence="11">2.3.1.-</ecNumber>
    </alternativeName>
    <alternativeName>
        <fullName evidence="10">Zinc finger DHHC domain-containing protein 3</fullName>
    </alternativeName>
</protein>
<gene>
    <name type="primary">zdhhc3a</name>
    <name evidence="7" type="synonym">dhhc3</name>
    <name evidence="8" type="synonym">zdhhc3</name>
</gene>